<feature type="chain" id="PRO_0000063563" description="Chaperonin GroEL">
    <location>
        <begin position="1"/>
        <end position="539"/>
    </location>
</feature>
<feature type="binding site" evidence="1">
    <location>
        <begin position="29"/>
        <end position="32"/>
    </location>
    <ligand>
        <name>ATP</name>
        <dbReference type="ChEBI" id="CHEBI:30616"/>
    </ligand>
</feature>
<feature type="binding site" evidence="1">
    <location>
        <begin position="86"/>
        <end position="90"/>
    </location>
    <ligand>
        <name>ATP</name>
        <dbReference type="ChEBI" id="CHEBI:30616"/>
    </ligand>
</feature>
<feature type="binding site" evidence="1">
    <location>
        <position position="413"/>
    </location>
    <ligand>
        <name>ATP</name>
        <dbReference type="ChEBI" id="CHEBI:30616"/>
    </ligand>
</feature>
<feature type="binding site" evidence="1">
    <location>
        <begin position="476"/>
        <end position="478"/>
    </location>
    <ligand>
        <name>ATP</name>
        <dbReference type="ChEBI" id="CHEBI:30616"/>
    </ligand>
</feature>
<feature type="binding site" evidence="1">
    <location>
        <position position="492"/>
    </location>
    <ligand>
        <name>ATP</name>
        <dbReference type="ChEBI" id="CHEBI:30616"/>
    </ligand>
</feature>
<sequence length="539" mass="56923">MAKDIKFSSDARAAMVRGVDTLADTVKVTLGPKGRNVVLEKAFGSPLITNDGVTIAKEIELEDHFENMGAKLVSEVASKTNDIAGDGTTTATVLTQAIVREGLKNVTAGANPIGIRRGIEAAVAAAVEELKVIAQPVANKEAIAQVAAVSSRSEKVGEYISEAMERVGNDGVITIEESRGMETELEVVEGMQFDRGYLSQYMVTDNEKMVADLENPYILVTDKKISNIQDILPLLEEVLKTSRPLLIIADDVAGEALPTLVLNKIRGTFNVVAVKAPGFGDRRKAMLEDIAVLTGATVITEDLGLELKDATMESLGQASKVTVDKDSTVIVEGAGSAEAIANRVNLIKSQLETTTSEFDREKLQERLAKLSGGVAVIKVGAATETALKEMKLRIEDALNATRAAVEEGIVAGGGTALVNVIAKVAELDLEGDDATGRNIVLRALEEPVRQIAYNAGYEGSVIIDKLKNSPVGTGFNAANGEWVDMVESGIIDPVKVTRSALQNAASVASLILTTEAVVADKPEQKAPAAPATDPGMMGY</sequence>
<gene>
    <name evidence="1" type="primary">groEL</name>
    <name evidence="1" type="synonym">groL</name>
    <name type="ordered locus">str0204</name>
</gene>
<organism>
    <name type="scientific">Streptococcus thermophilus (strain CNRZ 1066)</name>
    <dbReference type="NCBI Taxonomy" id="299768"/>
    <lineage>
        <taxon>Bacteria</taxon>
        <taxon>Bacillati</taxon>
        <taxon>Bacillota</taxon>
        <taxon>Bacilli</taxon>
        <taxon>Lactobacillales</taxon>
        <taxon>Streptococcaceae</taxon>
        <taxon>Streptococcus</taxon>
    </lineage>
</organism>
<dbReference type="EC" id="5.6.1.7" evidence="1"/>
<dbReference type="EMBL" id="CP000024">
    <property type="protein sequence ID" value="AAV61818.1"/>
    <property type="molecule type" value="Genomic_DNA"/>
</dbReference>
<dbReference type="RefSeq" id="WP_011225399.1">
    <property type="nucleotide sequence ID" value="NC_006449.1"/>
</dbReference>
<dbReference type="SMR" id="Q5M1M9"/>
<dbReference type="GeneID" id="66898140"/>
<dbReference type="KEGG" id="stc:str0204"/>
<dbReference type="HOGENOM" id="CLU_016503_3_0_9"/>
<dbReference type="GO" id="GO:0005737">
    <property type="term" value="C:cytoplasm"/>
    <property type="evidence" value="ECO:0007669"/>
    <property type="project" value="UniProtKB-SubCell"/>
</dbReference>
<dbReference type="GO" id="GO:0005524">
    <property type="term" value="F:ATP binding"/>
    <property type="evidence" value="ECO:0007669"/>
    <property type="project" value="UniProtKB-UniRule"/>
</dbReference>
<dbReference type="GO" id="GO:0140662">
    <property type="term" value="F:ATP-dependent protein folding chaperone"/>
    <property type="evidence" value="ECO:0007669"/>
    <property type="project" value="InterPro"/>
</dbReference>
<dbReference type="GO" id="GO:0016853">
    <property type="term" value="F:isomerase activity"/>
    <property type="evidence" value="ECO:0007669"/>
    <property type="project" value="UniProtKB-KW"/>
</dbReference>
<dbReference type="GO" id="GO:0051082">
    <property type="term" value="F:unfolded protein binding"/>
    <property type="evidence" value="ECO:0007669"/>
    <property type="project" value="UniProtKB-UniRule"/>
</dbReference>
<dbReference type="GO" id="GO:0042026">
    <property type="term" value="P:protein refolding"/>
    <property type="evidence" value="ECO:0007669"/>
    <property type="project" value="UniProtKB-UniRule"/>
</dbReference>
<dbReference type="CDD" id="cd03344">
    <property type="entry name" value="GroEL"/>
    <property type="match status" value="1"/>
</dbReference>
<dbReference type="FunFam" id="1.10.560.10:FF:000001">
    <property type="entry name" value="60 kDa chaperonin"/>
    <property type="match status" value="1"/>
</dbReference>
<dbReference type="FunFam" id="3.50.7.10:FF:000001">
    <property type="entry name" value="60 kDa chaperonin"/>
    <property type="match status" value="1"/>
</dbReference>
<dbReference type="Gene3D" id="3.50.7.10">
    <property type="entry name" value="GroEL"/>
    <property type="match status" value="1"/>
</dbReference>
<dbReference type="Gene3D" id="1.10.560.10">
    <property type="entry name" value="GroEL-like equatorial domain"/>
    <property type="match status" value="1"/>
</dbReference>
<dbReference type="Gene3D" id="3.30.260.10">
    <property type="entry name" value="TCP-1-like chaperonin intermediate domain"/>
    <property type="match status" value="1"/>
</dbReference>
<dbReference type="HAMAP" id="MF_00600">
    <property type="entry name" value="CH60"/>
    <property type="match status" value="1"/>
</dbReference>
<dbReference type="InterPro" id="IPR018370">
    <property type="entry name" value="Chaperonin_Cpn60_CS"/>
</dbReference>
<dbReference type="InterPro" id="IPR001844">
    <property type="entry name" value="Cpn60/GroEL"/>
</dbReference>
<dbReference type="InterPro" id="IPR002423">
    <property type="entry name" value="Cpn60/GroEL/TCP-1"/>
</dbReference>
<dbReference type="InterPro" id="IPR027409">
    <property type="entry name" value="GroEL-like_apical_dom_sf"/>
</dbReference>
<dbReference type="InterPro" id="IPR027413">
    <property type="entry name" value="GROEL-like_equatorial_sf"/>
</dbReference>
<dbReference type="InterPro" id="IPR027410">
    <property type="entry name" value="TCP-1-like_intermed_sf"/>
</dbReference>
<dbReference type="NCBIfam" id="TIGR02348">
    <property type="entry name" value="GroEL"/>
    <property type="match status" value="1"/>
</dbReference>
<dbReference type="NCBIfam" id="NF000592">
    <property type="entry name" value="PRK00013.1"/>
    <property type="match status" value="1"/>
</dbReference>
<dbReference type="NCBIfam" id="NF009487">
    <property type="entry name" value="PRK12849.1"/>
    <property type="match status" value="1"/>
</dbReference>
<dbReference type="NCBIfam" id="NF009488">
    <property type="entry name" value="PRK12850.1"/>
    <property type="match status" value="1"/>
</dbReference>
<dbReference type="NCBIfam" id="NF009489">
    <property type="entry name" value="PRK12851.1"/>
    <property type="match status" value="1"/>
</dbReference>
<dbReference type="PANTHER" id="PTHR45633">
    <property type="entry name" value="60 KDA HEAT SHOCK PROTEIN, MITOCHONDRIAL"/>
    <property type="match status" value="1"/>
</dbReference>
<dbReference type="Pfam" id="PF00118">
    <property type="entry name" value="Cpn60_TCP1"/>
    <property type="match status" value="1"/>
</dbReference>
<dbReference type="PRINTS" id="PR00298">
    <property type="entry name" value="CHAPERONIN60"/>
</dbReference>
<dbReference type="SUPFAM" id="SSF52029">
    <property type="entry name" value="GroEL apical domain-like"/>
    <property type="match status" value="1"/>
</dbReference>
<dbReference type="SUPFAM" id="SSF48592">
    <property type="entry name" value="GroEL equatorial domain-like"/>
    <property type="match status" value="1"/>
</dbReference>
<dbReference type="SUPFAM" id="SSF54849">
    <property type="entry name" value="GroEL-intermediate domain like"/>
    <property type="match status" value="1"/>
</dbReference>
<dbReference type="PROSITE" id="PS00296">
    <property type="entry name" value="CHAPERONINS_CPN60"/>
    <property type="match status" value="1"/>
</dbReference>
<evidence type="ECO:0000255" key="1">
    <source>
        <dbReference type="HAMAP-Rule" id="MF_00600"/>
    </source>
</evidence>
<reference key="1">
    <citation type="journal article" date="2004" name="Nat. Biotechnol.">
        <title>Complete sequence and comparative genome analysis of the dairy bacterium Streptococcus thermophilus.</title>
        <authorList>
            <person name="Bolotin A."/>
            <person name="Quinquis B."/>
            <person name="Renault P."/>
            <person name="Sorokin A."/>
            <person name="Ehrlich S.D."/>
            <person name="Kulakauskas S."/>
            <person name="Lapidus A."/>
            <person name="Goltsman E."/>
            <person name="Mazur M."/>
            <person name="Pusch G.D."/>
            <person name="Fonstein M."/>
            <person name="Overbeek R."/>
            <person name="Kyprides N."/>
            <person name="Purnelle B."/>
            <person name="Prozzi D."/>
            <person name="Ngui K."/>
            <person name="Masuy D."/>
            <person name="Hancy F."/>
            <person name="Burteau S."/>
            <person name="Boutry M."/>
            <person name="Delcour J."/>
            <person name="Goffeau A."/>
            <person name="Hols P."/>
        </authorList>
    </citation>
    <scope>NUCLEOTIDE SEQUENCE [LARGE SCALE GENOMIC DNA]</scope>
    <source>
        <strain>CNRZ 1066</strain>
    </source>
</reference>
<keyword id="KW-0067">ATP-binding</keyword>
<keyword id="KW-0143">Chaperone</keyword>
<keyword id="KW-0963">Cytoplasm</keyword>
<keyword id="KW-0413">Isomerase</keyword>
<keyword id="KW-0547">Nucleotide-binding</keyword>
<accession>Q5M1M9</accession>
<protein>
    <recommendedName>
        <fullName evidence="1">Chaperonin GroEL</fullName>
        <ecNumber evidence="1">5.6.1.7</ecNumber>
    </recommendedName>
    <alternativeName>
        <fullName evidence="1">60 kDa chaperonin</fullName>
    </alternativeName>
    <alternativeName>
        <fullName evidence="1">Chaperonin-60</fullName>
        <shortName evidence="1">Cpn60</shortName>
    </alternativeName>
</protein>
<name>CH60_STRT1</name>
<comment type="function">
    <text evidence="1">Together with its co-chaperonin GroES, plays an essential role in assisting protein folding. The GroEL-GroES system forms a nano-cage that allows encapsulation of the non-native substrate proteins and provides a physical environment optimized to promote and accelerate protein folding.</text>
</comment>
<comment type="catalytic activity">
    <reaction evidence="1">
        <text>ATP + H2O + a folded polypeptide = ADP + phosphate + an unfolded polypeptide.</text>
        <dbReference type="EC" id="5.6.1.7"/>
    </reaction>
</comment>
<comment type="subunit">
    <text evidence="1">Forms a cylinder of 14 subunits composed of two heptameric rings stacked back-to-back. Interacts with the co-chaperonin GroES.</text>
</comment>
<comment type="subcellular location">
    <subcellularLocation>
        <location evidence="1">Cytoplasm</location>
    </subcellularLocation>
</comment>
<comment type="similarity">
    <text evidence="1">Belongs to the chaperonin (HSP60) family.</text>
</comment>
<proteinExistence type="inferred from homology"/>